<proteinExistence type="inferred from homology"/>
<comment type="function">
    <text evidence="1">Member of a network of 50S ribosomal subunit biogenesis factors which assembles along the 30S-50S interface, preventing incorrect 23S rRNA structures from forming. Promotes peptidyl transferase center (PTC) maturation.</text>
</comment>
<comment type="subcellular location">
    <subcellularLocation>
        <location evidence="1">Cytoplasm</location>
    </subcellularLocation>
    <text evidence="1">Associates with late stage pre-50S ribosomal subunits.</text>
</comment>
<comment type="similarity">
    <text evidence="1">Belongs to the DarP family.</text>
</comment>
<comment type="sequence caution" evidence="2">
    <conflict type="erroneous initiation">
        <sequence resource="EMBL-CDS" id="CAM08266"/>
    </conflict>
    <text>Extended N-terminus.</text>
</comment>
<evidence type="ECO:0000255" key="1">
    <source>
        <dbReference type="HAMAP-Rule" id="MF_00765"/>
    </source>
</evidence>
<evidence type="ECO:0000305" key="2"/>
<organism>
    <name type="scientific">Neisseria meningitidis serogroup A / serotype 4A (strain DSM 15465 / Z2491)</name>
    <dbReference type="NCBI Taxonomy" id="122587"/>
    <lineage>
        <taxon>Bacteria</taxon>
        <taxon>Pseudomonadati</taxon>
        <taxon>Pseudomonadota</taxon>
        <taxon>Betaproteobacteria</taxon>
        <taxon>Neisseriales</taxon>
        <taxon>Neisseriaceae</taxon>
        <taxon>Neisseria</taxon>
    </lineage>
</organism>
<reference key="1">
    <citation type="journal article" date="2000" name="Nature">
        <title>Complete DNA sequence of a serogroup A strain of Neisseria meningitidis Z2491.</title>
        <authorList>
            <person name="Parkhill J."/>
            <person name="Achtman M."/>
            <person name="James K.D."/>
            <person name="Bentley S.D."/>
            <person name="Churcher C.M."/>
            <person name="Klee S.R."/>
            <person name="Morelli G."/>
            <person name="Basham D."/>
            <person name="Brown D."/>
            <person name="Chillingworth T."/>
            <person name="Davies R.M."/>
            <person name="Davis P."/>
            <person name="Devlin K."/>
            <person name="Feltwell T."/>
            <person name="Hamlin N."/>
            <person name="Holroyd S."/>
            <person name="Jagels K."/>
            <person name="Leather S."/>
            <person name="Moule S."/>
            <person name="Mungall K.L."/>
            <person name="Quail M.A."/>
            <person name="Rajandream M.A."/>
            <person name="Rutherford K.M."/>
            <person name="Simmonds M."/>
            <person name="Skelton J."/>
            <person name="Whitehead S."/>
            <person name="Spratt B.G."/>
            <person name="Barrell B.G."/>
        </authorList>
    </citation>
    <scope>NUCLEOTIDE SEQUENCE [LARGE SCALE GENOMIC DNA]</scope>
    <source>
        <strain>DSM 15465 / Z2491</strain>
    </source>
</reference>
<dbReference type="EMBL" id="AL157959">
    <property type="protein sequence ID" value="CAM08266.1"/>
    <property type="status" value="ALT_INIT"/>
    <property type="molecule type" value="Genomic_DNA"/>
</dbReference>
<dbReference type="SMR" id="Q9JV11"/>
<dbReference type="EnsemblBacteria" id="CAM08266">
    <property type="protein sequence ID" value="CAM08266"/>
    <property type="gene ID" value="NMA1049"/>
</dbReference>
<dbReference type="KEGG" id="nma:NMA1049"/>
<dbReference type="HOGENOM" id="CLU_106757_1_0_4"/>
<dbReference type="Proteomes" id="UP000000626">
    <property type="component" value="Chromosome"/>
</dbReference>
<dbReference type="GO" id="GO:0005737">
    <property type="term" value="C:cytoplasm"/>
    <property type="evidence" value="ECO:0007669"/>
    <property type="project" value="UniProtKB-SubCell"/>
</dbReference>
<dbReference type="GO" id="GO:0043022">
    <property type="term" value="F:ribosome binding"/>
    <property type="evidence" value="ECO:0007669"/>
    <property type="project" value="UniProtKB-UniRule"/>
</dbReference>
<dbReference type="GO" id="GO:0019843">
    <property type="term" value="F:rRNA binding"/>
    <property type="evidence" value="ECO:0007669"/>
    <property type="project" value="UniProtKB-UniRule"/>
</dbReference>
<dbReference type="GO" id="GO:1902626">
    <property type="term" value="P:assembly of large subunit precursor of preribosome"/>
    <property type="evidence" value="ECO:0007669"/>
    <property type="project" value="UniProtKB-UniRule"/>
</dbReference>
<dbReference type="CDD" id="cd16331">
    <property type="entry name" value="YjgA-like"/>
    <property type="match status" value="1"/>
</dbReference>
<dbReference type="Gene3D" id="1.10.60.30">
    <property type="entry name" value="PSPTO4464-like domains"/>
    <property type="match status" value="2"/>
</dbReference>
<dbReference type="HAMAP" id="MF_00765">
    <property type="entry name" value="DarP"/>
    <property type="match status" value="1"/>
</dbReference>
<dbReference type="InterPro" id="IPR006839">
    <property type="entry name" value="DarP"/>
</dbReference>
<dbReference type="InterPro" id="IPR023153">
    <property type="entry name" value="DarP_sf"/>
</dbReference>
<dbReference type="NCBIfam" id="NF003593">
    <property type="entry name" value="PRK05255.1-1"/>
    <property type="match status" value="1"/>
</dbReference>
<dbReference type="PANTHER" id="PTHR38101">
    <property type="entry name" value="UPF0307 PROTEIN YJGA"/>
    <property type="match status" value="1"/>
</dbReference>
<dbReference type="PANTHER" id="PTHR38101:SF1">
    <property type="entry name" value="UPF0307 PROTEIN YJGA"/>
    <property type="match status" value="1"/>
</dbReference>
<dbReference type="Pfam" id="PF04751">
    <property type="entry name" value="DarP"/>
    <property type="match status" value="1"/>
</dbReference>
<dbReference type="PIRSF" id="PIRSF016183">
    <property type="entry name" value="UCP016183"/>
    <property type="match status" value="1"/>
</dbReference>
<dbReference type="SUPFAM" id="SSF158710">
    <property type="entry name" value="PSPTO4464-like"/>
    <property type="match status" value="1"/>
</dbReference>
<feature type="chain" id="PRO_0000208218" description="Dual-action ribosomal maturation protein DarP">
    <location>
        <begin position="1"/>
        <end position="170"/>
    </location>
</feature>
<keyword id="KW-0963">Cytoplasm</keyword>
<keyword id="KW-0690">Ribosome biogenesis</keyword>
<keyword id="KW-0694">RNA-binding</keyword>
<keyword id="KW-0699">rRNA-binding</keyword>
<gene>
    <name evidence="1" type="primary">darP</name>
    <name type="ordered locus">NMA1049</name>
</gene>
<accession>Q9JV11</accession>
<accession>A1IR80</accession>
<sequence>MFEQEDEWISKTQMKKQMNGLQDLGMELTKLSNDTLKKIGLDEDLYEAVVTYKKITSNGALKRQAQFIGRLMRDTDPAPIEAFLAKLRGDDAAHNAFLQRVEQARVRLLADDGALTQFMSDFPHADAGKLRTLIRNTKKEQEQNKPPKNFRALFQELKTVMESQGGTGEA</sequence>
<name>DARP_NEIMA</name>
<protein>
    <recommendedName>
        <fullName evidence="1">Dual-action ribosomal maturation protein DarP</fullName>
    </recommendedName>
    <alternativeName>
        <fullName evidence="1">Large ribosomal subunit assembly factor DarP</fullName>
    </alternativeName>
</protein>